<comment type="function">
    <text evidence="2 4">Central receptor component of the translocase of the outer membrane of mitochondria (TOM complex) responsible for the recognition and translocation of cytosolically synthesized mitochondrial preproteins. Together with the peripheral receptor TOM20 functions as the transit peptide receptor and facilitates the movement of preproteins into the translocation pore (By similarity). Required for the translocation across the mitochondrial outer membrane of cytochrome P450 monooxygenases (By similarity).</text>
</comment>
<comment type="subunit">
    <text evidence="1">Forms part of the preprotein translocase complex of the outer mitochondrial membrane (TOM complex) which consists of at least 7 different proteins (TOMM5, TOMM6, TOMM7, TOMM20, TOMM22, TOMM40 and TOMM70). Interacts with PPP2R2B and TOMM40 (By similarity).</text>
</comment>
<comment type="subcellular location">
    <subcellularLocation>
        <location evidence="1">Mitochondrion outer membrane</location>
        <topology evidence="1">Single-pass membrane protein</topology>
    </subcellularLocation>
</comment>
<comment type="domain">
    <text evidence="1">The N-terminal domain (residues 1-62) is important for binding to the unfolded mature imported proteins. Residues (49-71) of the cytoplasmic domain interacts with TOMM20 while the C-terminal segment (residues 63-82) binds presequence of preproteins. Requires the transmembrane domain (TMD), a short segment (the import sequence) in the cytoplasmic domain localizing separately from the TMD and the C-tail signal in the C-terminal domain for efficient targeting and integration into the TOM complex (By similarity).</text>
</comment>
<comment type="similarity">
    <text evidence="7">Belongs to the Tom22 family.</text>
</comment>
<reference key="1">
    <citation type="submission" date="2005-06" db="EMBL/GenBank/DDBJ databases">
        <title>DNA sequences of macaque genes expressed in brain or testis and its evolutionary implications.</title>
        <authorList>
            <consortium name="International consortium for macaque cDNA sequencing and analysis"/>
        </authorList>
    </citation>
    <scope>NUCLEOTIDE SEQUENCE [LARGE SCALE MRNA]</scope>
    <source>
        <tissue>Testis</tissue>
    </source>
</reference>
<protein>
    <recommendedName>
        <fullName>Mitochondrial import receptor subunit TOM22 homolog</fullName>
    </recommendedName>
    <alternativeName>
        <fullName>Translocase of outer membrane 22 kDa subunit homolog</fullName>
    </alternativeName>
</protein>
<accession>Q4R3C7</accession>
<dbReference type="EMBL" id="AB179339">
    <property type="protein sequence ID" value="BAE02390.1"/>
    <property type="molecule type" value="mRNA"/>
</dbReference>
<dbReference type="RefSeq" id="NP_001272071.1">
    <property type="nucleotide sequence ID" value="NM_001285142.1"/>
</dbReference>
<dbReference type="RefSeq" id="XP_045219554.1">
    <property type="nucleotide sequence ID" value="XM_045363619.2"/>
</dbReference>
<dbReference type="SMR" id="Q4R3C7"/>
<dbReference type="STRING" id="9541.ENSMFAP00000026871"/>
<dbReference type="Ensembl" id="ENSMFAT00000001053.2">
    <property type="protein sequence ID" value="ENSMFAP00000026871.1"/>
    <property type="gene ID" value="ENSMFAG00000044855.2"/>
</dbReference>
<dbReference type="GeneID" id="102137054"/>
<dbReference type="VEuPathDB" id="HostDB:ENSMFAG00000044855"/>
<dbReference type="eggNOG" id="KOG4111">
    <property type="taxonomic scope" value="Eukaryota"/>
</dbReference>
<dbReference type="GeneTree" id="ENSGT00390000016475"/>
<dbReference type="OMA" id="DKDSGME"/>
<dbReference type="Proteomes" id="UP000233100">
    <property type="component" value="Chromosome 10"/>
</dbReference>
<dbReference type="Bgee" id="ENSMFAG00000044855">
    <property type="expression patterns" value="Expressed in liver and 13 other cell types or tissues"/>
</dbReference>
<dbReference type="GO" id="GO:0005742">
    <property type="term" value="C:mitochondrial outer membrane translocase complex"/>
    <property type="evidence" value="ECO:0007669"/>
    <property type="project" value="Ensembl"/>
</dbReference>
<dbReference type="GO" id="GO:0030943">
    <property type="term" value="F:mitochondrion targeting sequence binding"/>
    <property type="evidence" value="ECO:0007669"/>
    <property type="project" value="Ensembl"/>
</dbReference>
<dbReference type="GO" id="GO:0045040">
    <property type="term" value="P:protein insertion into mitochondrial outer membrane"/>
    <property type="evidence" value="ECO:0007669"/>
    <property type="project" value="Ensembl"/>
</dbReference>
<dbReference type="GO" id="GO:0006626">
    <property type="term" value="P:protein targeting to mitochondrion"/>
    <property type="evidence" value="ECO:0000250"/>
    <property type="project" value="UniProtKB"/>
</dbReference>
<dbReference type="CDD" id="cd22884">
    <property type="entry name" value="TOM22"/>
    <property type="match status" value="1"/>
</dbReference>
<dbReference type="InterPro" id="IPR005683">
    <property type="entry name" value="Tom22"/>
</dbReference>
<dbReference type="PANTHER" id="PTHR12504">
    <property type="entry name" value="MITOCHONDRIAL IMPORT RECEPTOR SUBUNIT TOM22"/>
    <property type="match status" value="1"/>
</dbReference>
<dbReference type="PANTHER" id="PTHR12504:SF0">
    <property type="entry name" value="MITOCHONDRIAL IMPORT RECEPTOR SUBUNIT TOM22 HOMOLOG"/>
    <property type="match status" value="1"/>
</dbReference>
<dbReference type="Pfam" id="PF04281">
    <property type="entry name" value="Tom22"/>
    <property type="match status" value="1"/>
</dbReference>
<organism>
    <name type="scientific">Macaca fascicularis</name>
    <name type="common">Crab-eating macaque</name>
    <name type="synonym">Cynomolgus monkey</name>
    <dbReference type="NCBI Taxonomy" id="9541"/>
    <lineage>
        <taxon>Eukaryota</taxon>
        <taxon>Metazoa</taxon>
        <taxon>Chordata</taxon>
        <taxon>Craniata</taxon>
        <taxon>Vertebrata</taxon>
        <taxon>Euteleostomi</taxon>
        <taxon>Mammalia</taxon>
        <taxon>Eutheria</taxon>
        <taxon>Euarchontoglires</taxon>
        <taxon>Primates</taxon>
        <taxon>Haplorrhini</taxon>
        <taxon>Catarrhini</taxon>
        <taxon>Cercopithecidae</taxon>
        <taxon>Cercopithecinae</taxon>
        <taxon>Macaca</taxon>
    </lineage>
</organism>
<name>TOM22_MACFA</name>
<sequence>MAAAVAAAGAGEPQSPDELLPKGDAEKPEEELEEDDDEELDETLSERLWGLTEMFPERVRSAAGATFDLSLFVAQKMYRFSRAALWIGTTSFMILVLPVVFETEKLQMEQQQQLQQRQILLGPNTGLSGGMPGALPSLPGKI</sequence>
<proteinExistence type="evidence at transcript level"/>
<feature type="initiator methionine" description="Removed" evidence="4">
    <location>
        <position position="1"/>
    </location>
</feature>
<feature type="chain" id="PRO_0000076107" description="Mitochondrial import receptor subunit TOM22 homolog">
    <location>
        <begin position="2"/>
        <end position="142"/>
    </location>
</feature>
<feature type="topological domain" description="Cytoplasmic" evidence="5">
    <location>
        <begin position="2"/>
        <end position="83"/>
    </location>
</feature>
<feature type="transmembrane region" description="Helical" evidence="5">
    <location>
        <begin position="84"/>
        <end position="103"/>
    </location>
</feature>
<feature type="topological domain" description="Mitochondrial intermembrane" evidence="5">
    <location>
        <begin position="104"/>
        <end position="142"/>
    </location>
</feature>
<feature type="region of interest" description="Disordered" evidence="6">
    <location>
        <begin position="1"/>
        <end position="42"/>
    </location>
</feature>
<feature type="region of interest" description="Import sequence; necessary for mitochondrion outer membrane localization and integration in the TOM complex" evidence="1">
    <location>
        <begin position="41"/>
        <end position="50"/>
    </location>
</feature>
<feature type="region of interest" description="TMD; necessary for mitochondrion outer membrane localization and integration in the TOM complex" evidence="1">
    <location>
        <begin position="83"/>
        <end position="103"/>
    </location>
</feature>
<feature type="region of interest" description="C-tail signal; necessary for mitochondrion outer membrane localization and integration in the TOM complex" evidence="1">
    <location>
        <begin position="123"/>
        <end position="142"/>
    </location>
</feature>
<feature type="compositionally biased region" description="Low complexity" evidence="6">
    <location>
        <begin position="1"/>
        <end position="11"/>
    </location>
</feature>
<feature type="compositionally biased region" description="Acidic residues" evidence="6">
    <location>
        <begin position="27"/>
        <end position="42"/>
    </location>
</feature>
<feature type="modified residue" description="N-acetylalanine" evidence="4">
    <location>
        <position position="2"/>
    </location>
</feature>
<feature type="modified residue" description="Phosphoserine" evidence="4">
    <location>
        <position position="15"/>
    </location>
</feature>
<feature type="modified residue" description="Phosphothreonine" evidence="4">
    <location>
        <position position="43"/>
    </location>
</feature>
<feature type="modified residue" description="Phosphoserine" evidence="3">
    <location>
        <position position="45"/>
    </location>
</feature>
<evidence type="ECO:0000250" key="1"/>
<evidence type="ECO:0000250" key="2">
    <source>
        <dbReference type="UniProtKB" id="Q75Q41"/>
    </source>
</evidence>
<evidence type="ECO:0000250" key="3">
    <source>
        <dbReference type="UniProtKB" id="Q9CPQ3"/>
    </source>
</evidence>
<evidence type="ECO:0000250" key="4">
    <source>
        <dbReference type="UniProtKB" id="Q9NS69"/>
    </source>
</evidence>
<evidence type="ECO:0000255" key="5"/>
<evidence type="ECO:0000256" key="6">
    <source>
        <dbReference type="SAM" id="MobiDB-lite"/>
    </source>
</evidence>
<evidence type="ECO:0000305" key="7"/>
<gene>
    <name type="primary">TOMM22</name>
    <name type="ORF">QtsA-17845</name>
</gene>
<keyword id="KW-0007">Acetylation</keyword>
<keyword id="KW-0472">Membrane</keyword>
<keyword id="KW-0496">Mitochondrion</keyword>
<keyword id="KW-1000">Mitochondrion outer membrane</keyword>
<keyword id="KW-0597">Phosphoprotein</keyword>
<keyword id="KW-0653">Protein transport</keyword>
<keyword id="KW-0675">Receptor</keyword>
<keyword id="KW-1185">Reference proteome</keyword>
<keyword id="KW-0811">Translocation</keyword>
<keyword id="KW-0812">Transmembrane</keyword>
<keyword id="KW-1133">Transmembrane helix</keyword>
<keyword id="KW-0813">Transport</keyword>